<organism>
    <name type="scientific">Frankia alni (strain DSM 45986 / CECT 9034 / ACN14a)</name>
    <dbReference type="NCBI Taxonomy" id="326424"/>
    <lineage>
        <taxon>Bacteria</taxon>
        <taxon>Bacillati</taxon>
        <taxon>Actinomycetota</taxon>
        <taxon>Actinomycetes</taxon>
        <taxon>Frankiales</taxon>
        <taxon>Frankiaceae</taxon>
        <taxon>Frankia</taxon>
    </lineage>
</organism>
<sequence length="377" mass="39882">MVFAAIPSPSRGVVHLGPVPLRAYALMIIIGIVVAVVVTGRRLRARGMDPALAGEIAYWAVPFGIVGARIYHVLSTPDAYFGEHGHVADVVKIWNGGLGIWGAIAGGALGAWLAARRLGISLALFADAAAPGIILAQAIGRWGNWFNQELYGKPTTLPWAVRIDPAHRADPGVATYQPTFLYEFLWNLVVAAILLLVDRRHRLGRGRLFALYVALYTFGRLWIEMLRIDTADEILGLRVNIWTSAIVCVGAVVALLVVRRPVDPDVSPQEQRALGLVQDRTRRQPTDAAGETAGETRTATRHDDATDGVDVNGADVDGADPSNVNGANVNGADPVNVNVNDADGAGAGAGEQPVAGAENGAAAVSSGRTRVERPPAT</sequence>
<gene>
    <name evidence="1" type="primary">lgt</name>
    <name type="ordered locus">FRAAL4966</name>
</gene>
<proteinExistence type="inferred from homology"/>
<protein>
    <recommendedName>
        <fullName evidence="1">Phosphatidylglycerol--prolipoprotein diacylglyceryl transferase</fullName>
        <ecNumber evidence="1">2.5.1.145</ecNumber>
    </recommendedName>
</protein>
<reference key="1">
    <citation type="journal article" date="2007" name="Genome Res.">
        <title>Genome characteristics of facultatively symbiotic Frankia sp. strains reflect host range and host plant biogeography.</title>
        <authorList>
            <person name="Normand P."/>
            <person name="Lapierre P."/>
            <person name="Tisa L.S."/>
            <person name="Gogarten J.P."/>
            <person name="Alloisio N."/>
            <person name="Bagnarol E."/>
            <person name="Bassi C.A."/>
            <person name="Berry A.M."/>
            <person name="Bickhart D.M."/>
            <person name="Choisne N."/>
            <person name="Couloux A."/>
            <person name="Cournoyer B."/>
            <person name="Cruveiller S."/>
            <person name="Daubin V."/>
            <person name="Demange N."/>
            <person name="Francino M.P."/>
            <person name="Goltsman E."/>
            <person name="Huang Y."/>
            <person name="Kopp O.R."/>
            <person name="Labarre L."/>
            <person name="Lapidus A."/>
            <person name="Lavire C."/>
            <person name="Marechal J."/>
            <person name="Martinez M."/>
            <person name="Mastronunzio J.E."/>
            <person name="Mullin B.C."/>
            <person name="Niemann J."/>
            <person name="Pujic P."/>
            <person name="Rawnsley T."/>
            <person name="Rouy Z."/>
            <person name="Schenowitz C."/>
            <person name="Sellstedt A."/>
            <person name="Tavares F."/>
            <person name="Tomkins J.P."/>
            <person name="Vallenet D."/>
            <person name="Valverde C."/>
            <person name="Wall L.G."/>
            <person name="Wang Y."/>
            <person name="Medigue C."/>
            <person name="Benson D.R."/>
        </authorList>
    </citation>
    <scope>NUCLEOTIDE SEQUENCE [LARGE SCALE GENOMIC DNA]</scope>
    <source>
        <strain>DSM 45986 / CECT 9034 / ACN14a</strain>
    </source>
</reference>
<comment type="function">
    <text evidence="1">Catalyzes the transfer of the diacylglyceryl group from phosphatidylglycerol to the sulfhydryl group of the N-terminal cysteine of a prolipoprotein, the first step in the formation of mature lipoproteins.</text>
</comment>
<comment type="catalytic activity">
    <reaction evidence="1">
        <text>L-cysteinyl-[prolipoprotein] + a 1,2-diacyl-sn-glycero-3-phospho-(1'-sn-glycerol) = an S-1,2-diacyl-sn-glyceryl-L-cysteinyl-[prolipoprotein] + sn-glycerol 1-phosphate + H(+)</text>
        <dbReference type="Rhea" id="RHEA:56712"/>
        <dbReference type="Rhea" id="RHEA-COMP:14679"/>
        <dbReference type="Rhea" id="RHEA-COMP:14680"/>
        <dbReference type="ChEBI" id="CHEBI:15378"/>
        <dbReference type="ChEBI" id="CHEBI:29950"/>
        <dbReference type="ChEBI" id="CHEBI:57685"/>
        <dbReference type="ChEBI" id="CHEBI:64716"/>
        <dbReference type="ChEBI" id="CHEBI:140658"/>
        <dbReference type="EC" id="2.5.1.145"/>
    </reaction>
</comment>
<comment type="pathway">
    <text evidence="1">Protein modification; lipoprotein biosynthesis (diacylglyceryl transfer).</text>
</comment>
<comment type="subcellular location">
    <subcellularLocation>
        <location evidence="1">Cell membrane</location>
        <topology evidence="1">Multi-pass membrane protein</topology>
    </subcellularLocation>
</comment>
<comment type="similarity">
    <text evidence="1">Belongs to the Lgt family.</text>
</comment>
<evidence type="ECO:0000255" key="1">
    <source>
        <dbReference type="HAMAP-Rule" id="MF_01147"/>
    </source>
</evidence>
<evidence type="ECO:0000256" key="2">
    <source>
        <dbReference type="SAM" id="MobiDB-lite"/>
    </source>
</evidence>
<accession>Q0RFY2</accession>
<feature type="chain" id="PRO_1000053429" description="Phosphatidylglycerol--prolipoprotein diacylglyceryl transferase">
    <location>
        <begin position="1"/>
        <end position="377"/>
    </location>
</feature>
<feature type="transmembrane region" description="Helical" evidence="1">
    <location>
        <begin position="18"/>
        <end position="38"/>
    </location>
</feature>
<feature type="transmembrane region" description="Helical" evidence="1">
    <location>
        <begin position="48"/>
        <end position="68"/>
    </location>
</feature>
<feature type="transmembrane region" description="Helical" evidence="1">
    <location>
        <begin position="93"/>
        <end position="113"/>
    </location>
</feature>
<feature type="transmembrane region" description="Helical" evidence="1">
    <location>
        <begin position="119"/>
        <end position="139"/>
    </location>
</feature>
<feature type="transmembrane region" description="Helical" evidence="1">
    <location>
        <begin position="177"/>
        <end position="197"/>
    </location>
</feature>
<feature type="transmembrane region" description="Helical" evidence="1">
    <location>
        <begin position="208"/>
        <end position="228"/>
    </location>
</feature>
<feature type="transmembrane region" description="Helical" evidence="1">
    <location>
        <begin position="238"/>
        <end position="258"/>
    </location>
</feature>
<feature type="region of interest" description="Disordered" evidence="2">
    <location>
        <begin position="265"/>
        <end position="377"/>
    </location>
</feature>
<feature type="compositionally biased region" description="Low complexity" evidence="2">
    <location>
        <begin position="288"/>
        <end position="297"/>
    </location>
</feature>
<feature type="compositionally biased region" description="Low complexity" evidence="2">
    <location>
        <begin position="308"/>
        <end position="344"/>
    </location>
</feature>
<feature type="binding site" evidence="1">
    <location>
        <position position="141"/>
    </location>
    <ligand>
        <name>a 1,2-diacyl-sn-glycero-3-phospho-(1'-sn-glycerol)</name>
        <dbReference type="ChEBI" id="CHEBI:64716"/>
    </ligand>
</feature>
<dbReference type="EC" id="2.5.1.145" evidence="1"/>
<dbReference type="EMBL" id="CT573213">
    <property type="protein sequence ID" value="CAJ63607.1"/>
    <property type="molecule type" value="Genomic_DNA"/>
</dbReference>
<dbReference type="RefSeq" id="WP_011606080.1">
    <property type="nucleotide sequence ID" value="NC_008278.1"/>
</dbReference>
<dbReference type="SMR" id="Q0RFY2"/>
<dbReference type="STRING" id="326424.FRAAL4966"/>
<dbReference type="KEGG" id="fal:FRAAL4966"/>
<dbReference type="eggNOG" id="COG0682">
    <property type="taxonomic scope" value="Bacteria"/>
</dbReference>
<dbReference type="HOGENOM" id="CLU_013386_2_2_11"/>
<dbReference type="OrthoDB" id="871140at2"/>
<dbReference type="UniPathway" id="UPA00664"/>
<dbReference type="Proteomes" id="UP000000657">
    <property type="component" value="Chromosome"/>
</dbReference>
<dbReference type="GO" id="GO:0005886">
    <property type="term" value="C:plasma membrane"/>
    <property type="evidence" value="ECO:0007669"/>
    <property type="project" value="UniProtKB-SubCell"/>
</dbReference>
<dbReference type="GO" id="GO:0008961">
    <property type="term" value="F:phosphatidylglycerol-prolipoprotein diacylglyceryl transferase activity"/>
    <property type="evidence" value="ECO:0007669"/>
    <property type="project" value="UniProtKB-UniRule"/>
</dbReference>
<dbReference type="GO" id="GO:0042158">
    <property type="term" value="P:lipoprotein biosynthetic process"/>
    <property type="evidence" value="ECO:0007669"/>
    <property type="project" value="UniProtKB-UniRule"/>
</dbReference>
<dbReference type="HAMAP" id="MF_01147">
    <property type="entry name" value="Lgt"/>
    <property type="match status" value="1"/>
</dbReference>
<dbReference type="InterPro" id="IPR001640">
    <property type="entry name" value="Lgt"/>
</dbReference>
<dbReference type="NCBIfam" id="TIGR00544">
    <property type="entry name" value="lgt"/>
    <property type="match status" value="1"/>
</dbReference>
<dbReference type="PANTHER" id="PTHR30589:SF0">
    <property type="entry name" value="PHOSPHATIDYLGLYCEROL--PROLIPOPROTEIN DIACYLGLYCERYL TRANSFERASE"/>
    <property type="match status" value="1"/>
</dbReference>
<dbReference type="PANTHER" id="PTHR30589">
    <property type="entry name" value="PROLIPOPROTEIN DIACYLGLYCERYL TRANSFERASE"/>
    <property type="match status" value="1"/>
</dbReference>
<dbReference type="Pfam" id="PF01790">
    <property type="entry name" value="LGT"/>
    <property type="match status" value="1"/>
</dbReference>
<dbReference type="PROSITE" id="PS01311">
    <property type="entry name" value="LGT"/>
    <property type="match status" value="1"/>
</dbReference>
<name>LGT_FRAAA</name>
<keyword id="KW-1003">Cell membrane</keyword>
<keyword id="KW-0472">Membrane</keyword>
<keyword id="KW-1185">Reference proteome</keyword>
<keyword id="KW-0808">Transferase</keyword>
<keyword id="KW-0812">Transmembrane</keyword>
<keyword id="KW-1133">Transmembrane helix</keyword>